<dbReference type="EC" id="5.3.1.4" evidence="1"/>
<dbReference type="EMBL" id="CP000026">
    <property type="protein sequence ID" value="AAV76137.1"/>
    <property type="molecule type" value="Genomic_DNA"/>
</dbReference>
<dbReference type="RefSeq" id="WP_000151699.1">
    <property type="nucleotide sequence ID" value="NC_006511.1"/>
</dbReference>
<dbReference type="SMR" id="Q5PDF2"/>
<dbReference type="KEGG" id="spt:SPA0104"/>
<dbReference type="HOGENOM" id="CLU_045663_0_0_6"/>
<dbReference type="UniPathway" id="UPA00145">
    <property type="reaction ID" value="UER00565"/>
</dbReference>
<dbReference type="Proteomes" id="UP000008185">
    <property type="component" value="Chromosome"/>
</dbReference>
<dbReference type="GO" id="GO:0005829">
    <property type="term" value="C:cytosol"/>
    <property type="evidence" value="ECO:0007669"/>
    <property type="project" value="TreeGrafter"/>
</dbReference>
<dbReference type="GO" id="GO:0008733">
    <property type="term" value="F:L-arabinose isomerase activity"/>
    <property type="evidence" value="ECO:0007669"/>
    <property type="project" value="UniProtKB-UniRule"/>
</dbReference>
<dbReference type="GO" id="GO:0030145">
    <property type="term" value="F:manganese ion binding"/>
    <property type="evidence" value="ECO:0007669"/>
    <property type="project" value="UniProtKB-UniRule"/>
</dbReference>
<dbReference type="GO" id="GO:0019569">
    <property type="term" value="P:L-arabinose catabolic process to xylulose 5-phosphate"/>
    <property type="evidence" value="ECO:0007669"/>
    <property type="project" value="UniProtKB-UniRule"/>
</dbReference>
<dbReference type="CDD" id="cd03557">
    <property type="entry name" value="L-arabinose_isomerase"/>
    <property type="match status" value="1"/>
</dbReference>
<dbReference type="FunFam" id="3.40.50.10940:FF:000001">
    <property type="entry name" value="L-arabinose isomerase"/>
    <property type="match status" value="1"/>
</dbReference>
<dbReference type="Gene3D" id="3.40.50.10940">
    <property type="match status" value="1"/>
</dbReference>
<dbReference type="HAMAP" id="MF_00519">
    <property type="entry name" value="Arabinose_Isome"/>
    <property type="match status" value="1"/>
</dbReference>
<dbReference type="InterPro" id="IPR024664">
    <property type="entry name" value="Ara_Isoase_C"/>
</dbReference>
<dbReference type="InterPro" id="IPR055390">
    <property type="entry name" value="AraA_central"/>
</dbReference>
<dbReference type="InterPro" id="IPR055389">
    <property type="entry name" value="AraA_N"/>
</dbReference>
<dbReference type="InterPro" id="IPR038583">
    <property type="entry name" value="AraA_N_sf"/>
</dbReference>
<dbReference type="InterPro" id="IPR004216">
    <property type="entry name" value="Fuc/Ara_isomerase_C"/>
</dbReference>
<dbReference type="InterPro" id="IPR009015">
    <property type="entry name" value="Fucose_isomerase_N/cen_sf"/>
</dbReference>
<dbReference type="InterPro" id="IPR003762">
    <property type="entry name" value="Lara_isomerase"/>
</dbReference>
<dbReference type="NCBIfam" id="NF002795">
    <property type="entry name" value="PRK02929.1"/>
    <property type="match status" value="1"/>
</dbReference>
<dbReference type="PANTHER" id="PTHR38464">
    <property type="entry name" value="L-ARABINOSE ISOMERASE"/>
    <property type="match status" value="1"/>
</dbReference>
<dbReference type="PANTHER" id="PTHR38464:SF1">
    <property type="entry name" value="L-ARABINOSE ISOMERASE"/>
    <property type="match status" value="1"/>
</dbReference>
<dbReference type="Pfam" id="PF24856">
    <property type="entry name" value="AraA_central"/>
    <property type="match status" value="1"/>
</dbReference>
<dbReference type="Pfam" id="PF02610">
    <property type="entry name" value="AraA_N"/>
    <property type="match status" value="1"/>
</dbReference>
<dbReference type="Pfam" id="PF11762">
    <property type="entry name" value="Arabinose_Iso_C"/>
    <property type="match status" value="1"/>
</dbReference>
<dbReference type="PIRSF" id="PIRSF001478">
    <property type="entry name" value="L-ara_isomerase"/>
    <property type="match status" value="1"/>
</dbReference>
<dbReference type="SUPFAM" id="SSF50443">
    <property type="entry name" value="FucI/AraA C-terminal domain-like"/>
    <property type="match status" value="1"/>
</dbReference>
<dbReference type="SUPFAM" id="SSF53743">
    <property type="entry name" value="FucI/AraA N-terminal and middle domains"/>
    <property type="match status" value="1"/>
</dbReference>
<evidence type="ECO:0000255" key="1">
    <source>
        <dbReference type="HAMAP-Rule" id="MF_00519"/>
    </source>
</evidence>
<accession>Q5PDF2</accession>
<keyword id="KW-0054">Arabinose catabolism</keyword>
<keyword id="KW-0119">Carbohydrate metabolism</keyword>
<keyword id="KW-0413">Isomerase</keyword>
<keyword id="KW-0464">Manganese</keyword>
<keyword id="KW-0479">Metal-binding</keyword>
<comment type="function">
    <text evidence="1">Catalyzes the conversion of L-arabinose to L-ribulose.</text>
</comment>
<comment type="catalytic activity">
    <reaction evidence="1">
        <text>beta-L-arabinopyranose = L-ribulose</text>
        <dbReference type="Rhea" id="RHEA:14821"/>
        <dbReference type="ChEBI" id="CHEBI:16880"/>
        <dbReference type="ChEBI" id="CHEBI:40886"/>
        <dbReference type="EC" id="5.3.1.4"/>
    </reaction>
</comment>
<comment type="cofactor">
    <cofactor evidence="1">
        <name>Mn(2+)</name>
        <dbReference type="ChEBI" id="CHEBI:29035"/>
    </cofactor>
    <text evidence="1">Binds 1 Mn(2+) ion per subunit.</text>
</comment>
<comment type="pathway">
    <text evidence="1">Carbohydrate degradation; L-arabinose degradation via L-ribulose; D-xylulose 5-phosphate from L-arabinose (bacterial route): step 1/3.</text>
</comment>
<comment type="subunit">
    <text evidence="1">Homohexamer.</text>
</comment>
<comment type="similarity">
    <text evidence="1">Belongs to the arabinose isomerase family.</text>
</comment>
<protein>
    <recommendedName>
        <fullName evidence="1">L-arabinose isomerase</fullName>
        <ecNumber evidence="1">5.3.1.4</ecNumber>
    </recommendedName>
</protein>
<sequence>MTIFDNYEVWFVIGSQHLYGAETLRQVTQHAEHVVNALNTEAKLPCKLVLKPLGTSPDEITAICRDANYDDRCAGLVVWLHTFSPAKMWINGLSILNKPLLQFHTQFNAALPWDSIDMDFMNLNQTAHGGREFGFIGARMRQQHAVVTGHWQDKEAHTRIGAWMRQAVSKQDTRQLKVCRFGDNMREVAVTDGDKVAAQIKFGFSVNTWAVGDLVQVVNSIGDGDISALIDEYESSYTLTPATQIHGDKRQNVREAARIELGMKRFLEQGGFHAFTTTFEDLHGLKQLPGLAVQRLMQQGYGFAGEGDWKTAALLRIMKVMSTGLQGGTSFMEDYTYHFEKGNDLVLGSHMLEVCPSIAVEEKPILDVQHLGIGGKEDPARLIFNTQTGPAIVASLIDLGDRYRLLVNCIDTVKTPHSLPKLPVANALWKAQPDLPTASEAWILAGGAHHTVFSHALDLNDMRQFAEIHDIEIAVIDNDTRLPAFKDALRWNEVYYGLKR</sequence>
<proteinExistence type="inferred from homology"/>
<gene>
    <name evidence="1" type="primary">araA</name>
    <name type="ordered locus">SPA0104</name>
</gene>
<feature type="chain" id="PRO_0000259342" description="L-arabinose isomerase">
    <location>
        <begin position="1"/>
        <end position="500"/>
    </location>
</feature>
<feature type="binding site" evidence="1">
    <location>
        <position position="306"/>
    </location>
    <ligand>
        <name>Mn(2+)</name>
        <dbReference type="ChEBI" id="CHEBI:29035"/>
    </ligand>
</feature>
<feature type="binding site" evidence="1">
    <location>
        <position position="333"/>
    </location>
    <ligand>
        <name>Mn(2+)</name>
        <dbReference type="ChEBI" id="CHEBI:29035"/>
    </ligand>
</feature>
<feature type="binding site" evidence="1">
    <location>
        <position position="350"/>
    </location>
    <ligand>
        <name>Mn(2+)</name>
        <dbReference type="ChEBI" id="CHEBI:29035"/>
    </ligand>
</feature>
<feature type="binding site" evidence="1">
    <location>
        <position position="450"/>
    </location>
    <ligand>
        <name>Mn(2+)</name>
        <dbReference type="ChEBI" id="CHEBI:29035"/>
    </ligand>
</feature>
<reference key="1">
    <citation type="journal article" date="2004" name="Nat. Genet.">
        <title>Comparison of genome degradation in Paratyphi A and Typhi, human-restricted serovars of Salmonella enterica that cause typhoid.</title>
        <authorList>
            <person name="McClelland M."/>
            <person name="Sanderson K.E."/>
            <person name="Clifton S.W."/>
            <person name="Latreille P."/>
            <person name="Porwollik S."/>
            <person name="Sabo A."/>
            <person name="Meyer R."/>
            <person name="Bieri T."/>
            <person name="Ozersky P."/>
            <person name="McLellan M."/>
            <person name="Harkins C.R."/>
            <person name="Wang C."/>
            <person name="Nguyen C."/>
            <person name="Berghoff A."/>
            <person name="Elliott G."/>
            <person name="Kohlberg S."/>
            <person name="Strong C."/>
            <person name="Du F."/>
            <person name="Carter J."/>
            <person name="Kremizki C."/>
            <person name="Layman D."/>
            <person name="Leonard S."/>
            <person name="Sun H."/>
            <person name="Fulton L."/>
            <person name="Nash W."/>
            <person name="Miner T."/>
            <person name="Minx P."/>
            <person name="Delehaunty K."/>
            <person name="Fronick C."/>
            <person name="Magrini V."/>
            <person name="Nhan M."/>
            <person name="Warren W."/>
            <person name="Florea L."/>
            <person name="Spieth J."/>
            <person name="Wilson R.K."/>
        </authorList>
    </citation>
    <scope>NUCLEOTIDE SEQUENCE [LARGE SCALE GENOMIC DNA]</scope>
    <source>
        <strain>ATCC 9150 / SARB42</strain>
    </source>
</reference>
<name>ARAA_SALPA</name>
<organism>
    <name type="scientific">Salmonella paratyphi A (strain ATCC 9150 / SARB42)</name>
    <dbReference type="NCBI Taxonomy" id="295319"/>
    <lineage>
        <taxon>Bacteria</taxon>
        <taxon>Pseudomonadati</taxon>
        <taxon>Pseudomonadota</taxon>
        <taxon>Gammaproteobacteria</taxon>
        <taxon>Enterobacterales</taxon>
        <taxon>Enterobacteriaceae</taxon>
        <taxon>Salmonella</taxon>
    </lineage>
</organism>